<gene>
    <name evidence="1" type="primary">ndhJ</name>
</gene>
<keyword id="KW-0150">Chloroplast</keyword>
<keyword id="KW-0472">Membrane</keyword>
<keyword id="KW-0520">NAD</keyword>
<keyword id="KW-0521">NADP</keyword>
<keyword id="KW-0934">Plastid</keyword>
<keyword id="KW-0618">Plastoquinone</keyword>
<keyword id="KW-0874">Quinone</keyword>
<keyword id="KW-0793">Thylakoid</keyword>
<keyword id="KW-1278">Translocase</keyword>
<keyword id="KW-0813">Transport</keyword>
<protein>
    <recommendedName>
        <fullName evidence="1">NAD(P)H-quinone oxidoreductase subunit J, chloroplastic</fullName>
        <ecNumber evidence="1">7.1.1.-</ecNumber>
    </recommendedName>
    <alternativeName>
        <fullName>NAD(P)H dehydrogenase subunit J</fullName>
    </alternativeName>
    <alternativeName>
        <fullName evidence="1">NADH-plastoquinone oxidoreductase subunit J</fullName>
    </alternativeName>
</protein>
<comment type="function">
    <text evidence="1">NDH shuttles electrons from NAD(P)H:plastoquinone, via FMN and iron-sulfur (Fe-S) centers, to quinones in the photosynthetic chain and possibly in a chloroplast respiratory chain. The immediate electron acceptor for the enzyme in this species is believed to be plastoquinone. Couples the redox reaction to proton translocation, and thus conserves the redox energy in a proton gradient.</text>
</comment>
<comment type="catalytic activity">
    <reaction evidence="1">
        <text>a plastoquinone + NADH + (n+1) H(+)(in) = a plastoquinol + NAD(+) + n H(+)(out)</text>
        <dbReference type="Rhea" id="RHEA:42608"/>
        <dbReference type="Rhea" id="RHEA-COMP:9561"/>
        <dbReference type="Rhea" id="RHEA-COMP:9562"/>
        <dbReference type="ChEBI" id="CHEBI:15378"/>
        <dbReference type="ChEBI" id="CHEBI:17757"/>
        <dbReference type="ChEBI" id="CHEBI:57540"/>
        <dbReference type="ChEBI" id="CHEBI:57945"/>
        <dbReference type="ChEBI" id="CHEBI:62192"/>
    </reaction>
</comment>
<comment type="catalytic activity">
    <reaction evidence="1">
        <text>a plastoquinone + NADPH + (n+1) H(+)(in) = a plastoquinol + NADP(+) + n H(+)(out)</text>
        <dbReference type="Rhea" id="RHEA:42612"/>
        <dbReference type="Rhea" id="RHEA-COMP:9561"/>
        <dbReference type="Rhea" id="RHEA-COMP:9562"/>
        <dbReference type="ChEBI" id="CHEBI:15378"/>
        <dbReference type="ChEBI" id="CHEBI:17757"/>
        <dbReference type="ChEBI" id="CHEBI:57783"/>
        <dbReference type="ChEBI" id="CHEBI:58349"/>
        <dbReference type="ChEBI" id="CHEBI:62192"/>
    </reaction>
</comment>
<comment type="subunit">
    <text evidence="1">NDH is composed of at least 16 different subunits, 5 of which are encoded in the nucleus.</text>
</comment>
<comment type="subcellular location">
    <subcellularLocation>
        <location evidence="1">Plastid</location>
        <location evidence="1">Chloroplast thylakoid membrane</location>
        <topology evidence="1">Peripheral membrane protein</topology>
        <orientation evidence="1">Stromal side</orientation>
    </subcellularLocation>
</comment>
<comment type="similarity">
    <text evidence="1">Belongs to the complex I 30 kDa subunit family.</text>
</comment>
<dbReference type="EC" id="7.1.1.-" evidence="1"/>
<dbReference type="EMBL" id="EU017278">
    <property type="protein sequence ID" value="ABU85685.1"/>
    <property type="molecule type" value="Genomic_DNA"/>
</dbReference>
<dbReference type="EMBL" id="EU090187">
    <property type="protein sequence ID" value="ABV26498.1"/>
    <property type="molecule type" value="Genomic_DNA"/>
</dbReference>
<dbReference type="RefSeq" id="YP_001718673.1">
    <property type="nucleotide sequence ID" value="NC_010442.1"/>
</dbReference>
<dbReference type="SMR" id="A9QC92"/>
<dbReference type="GeneID" id="6155938"/>
<dbReference type="GO" id="GO:0009535">
    <property type="term" value="C:chloroplast thylakoid membrane"/>
    <property type="evidence" value="ECO:0007669"/>
    <property type="project" value="UniProtKB-SubCell"/>
</dbReference>
<dbReference type="GO" id="GO:0008137">
    <property type="term" value="F:NADH dehydrogenase (ubiquinone) activity"/>
    <property type="evidence" value="ECO:0007669"/>
    <property type="project" value="InterPro"/>
</dbReference>
<dbReference type="GO" id="GO:0048038">
    <property type="term" value="F:quinone binding"/>
    <property type="evidence" value="ECO:0007669"/>
    <property type="project" value="UniProtKB-KW"/>
</dbReference>
<dbReference type="GO" id="GO:0019684">
    <property type="term" value="P:photosynthesis, light reaction"/>
    <property type="evidence" value="ECO:0007669"/>
    <property type="project" value="UniProtKB-UniRule"/>
</dbReference>
<dbReference type="FunFam" id="3.30.460.80:FF:000004">
    <property type="entry name" value="NAD(P)H-quinone oxidoreductase subunit J, chloroplastic"/>
    <property type="match status" value="1"/>
</dbReference>
<dbReference type="Gene3D" id="3.30.460.80">
    <property type="entry name" value="NADH:ubiquinone oxidoreductase, 30kDa subunit"/>
    <property type="match status" value="1"/>
</dbReference>
<dbReference type="HAMAP" id="MF_01357">
    <property type="entry name" value="NDH1_NuoC"/>
    <property type="match status" value="1"/>
</dbReference>
<dbReference type="InterPro" id="IPR010218">
    <property type="entry name" value="NADH_DH_suC"/>
</dbReference>
<dbReference type="InterPro" id="IPR037232">
    <property type="entry name" value="NADH_quin_OxRdtase_su_C/D-like"/>
</dbReference>
<dbReference type="InterPro" id="IPR001268">
    <property type="entry name" value="NADH_UbQ_OxRdtase_30kDa_su"/>
</dbReference>
<dbReference type="InterPro" id="IPR020396">
    <property type="entry name" value="NADH_UbQ_OxRdtase_CS"/>
</dbReference>
<dbReference type="NCBIfam" id="NF009141">
    <property type="entry name" value="PRK12494.1"/>
    <property type="match status" value="1"/>
</dbReference>
<dbReference type="PANTHER" id="PTHR10884:SF14">
    <property type="entry name" value="NADH DEHYDROGENASE [UBIQUINONE] IRON-SULFUR PROTEIN 3, MITOCHONDRIAL"/>
    <property type="match status" value="1"/>
</dbReference>
<dbReference type="PANTHER" id="PTHR10884">
    <property type="entry name" value="NADH DEHYDROGENASE UBIQUINONE IRON-SULFUR PROTEIN 3"/>
    <property type="match status" value="1"/>
</dbReference>
<dbReference type="Pfam" id="PF00329">
    <property type="entry name" value="Complex1_30kDa"/>
    <property type="match status" value="1"/>
</dbReference>
<dbReference type="SUPFAM" id="SSF143243">
    <property type="entry name" value="Nqo5-like"/>
    <property type="match status" value="1"/>
</dbReference>
<dbReference type="PROSITE" id="PS00542">
    <property type="entry name" value="COMPLEX1_30K"/>
    <property type="match status" value="1"/>
</dbReference>
<organism>
    <name type="scientific">Trachelium caeruleum</name>
    <name type="common">Blue throatwort</name>
    <dbReference type="NCBI Taxonomy" id="28494"/>
    <lineage>
        <taxon>Eukaryota</taxon>
        <taxon>Viridiplantae</taxon>
        <taxon>Streptophyta</taxon>
        <taxon>Embryophyta</taxon>
        <taxon>Tracheophyta</taxon>
        <taxon>Spermatophyta</taxon>
        <taxon>Magnoliopsida</taxon>
        <taxon>eudicotyledons</taxon>
        <taxon>Gunneridae</taxon>
        <taxon>Pentapetalae</taxon>
        <taxon>asterids</taxon>
        <taxon>campanulids</taxon>
        <taxon>Asterales</taxon>
        <taxon>Campanulaceae</taxon>
        <taxon>Trachelium</taxon>
    </lineage>
</organism>
<sequence>MQGYLSAWLVKHGLIHRSLGFDYQGIETFQIKSEDWHSIAVILYVYGYNYLRSQCAYDVAPGGLLASVYHLTRIKYGVDQPEEVCIKVFATRRDPRIPSVFCVWKSVDFQERESYDMLGISYDNHPRLKRILMPDSWIGWPLRKDYIAPNFYEIQDAH</sequence>
<evidence type="ECO:0000255" key="1">
    <source>
        <dbReference type="HAMAP-Rule" id="MF_01357"/>
    </source>
</evidence>
<proteinExistence type="inferred from homology"/>
<accession>A9QC92</accession>
<feature type="chain" id="PRO_0000358307" description="NAD(P)H-quinone oxidoreductase subunit J, chloroplastic">
    <location>
        <begin position="1"/>
        <end position="158"/>
    </location>
</feature>
<name>NDHJ_TRACE</name>
<geneLocation type="chloroplast"/>
<reference key="1">
    <citation type="journal article" date="2007" name="Proc. Natl. Acad. Sci. U.S.A.">
        <title>Analysis of 81 genes from 64 plastid genomes resolves relationships in angiosperms and identifies genome-scale evolutionary patterns.</title>
        <authorList>
            <person name="Jansen R.K."/>
            <person name="Cai Z."/>
            <person name="Raubeson L.A."/>
            <person name="Daniell H."/>
            <person name="dePamphilis C.W."/>
            <person name="Leebens-Mack J."/>
            <person name="Muller K.F."/>
            <person name="Guisinger-Bellian M."/>
            <person name="Haberle R.C."/>
            <person name="Hansen A.K."/>
            <person name="Chumley T.W."/>
            <person name="Lee S.B."/>
            <person name="Peery R."/>
            <person name="McNeal J.R."/>
            <person name="Kuehl J.V."/>
            <person name="Boore J.L."/>
        </authorList>
    </citation>
    <scope>NUCLEOTIDE SEQUENCE [GENOMIC DNA]</scope>
</reference>
<reference key="2">
    <citation type="journal article" date="2008" name="J. Mol. Evol.">
        <title>Extensive rearrangements in the chloroplast genome of Trachelium caeruleum are associated with repeats and tRNA genes.</title>
        <authorList>
            <person name="Haberle R.C."/>
            <person name="Fourcade H.M."/>
            <person name="Boore J.L."/>
            <person name="Jansen R.K."/>
        </authorList>
    </citation>
    <scope>NUCLEOTIDE SEQUENCE [LARGE SCALE GENOMIC DNA]</scope>
</reference>